<dbReference type="EC" id="2.7.-.-" evidence="1"/>
<dbReference type="EMBL" id="CP000948">
    <property type="protein sequence ID" value="ACB04857.1"/>
    <property type="molecule type" value="Genomic_DNA"/>
</dbReference>
<dbReference type="RefSeq" id="WP_000187530.1">
    <property type="nucleotide sequence ID" value="NC_010473.1"/>
</dbReference>
<dbReference type="SMR" id="B1XAJ9"/>
<dbReference type="GeneID" id="75204829"/>
<dbReference type="KEGG" id="ecd:ECDH10B_4026"/>
<dbReference type="HOGENOM" id="CLU_006533_0_0_6"/>
<dbReference type="UniPathway" id="UPA00232"/>
<dbReference type="GO" id="GO:0005886">
    <property type="term" value="C:plasma membrane"/>
    <property type="evidence" value="ECO:0007669"/>
    <property type="project" value="UniProtKB-SubCell"/>
</dbReference>
<dbReference type="GO" id="GO:0005524">
    <property type="term" value="F:ATP binding"/>
    <property type="evidence" value="ECO:0007669"/>
    <property type="project" value="UniProtKB-KW"/>
</dbReference>
<dbReference type="GO" id="GO:0004672">
    <property type="term" value="F:protein kinase activity"/>
    <property type="evidence" value="ECO:0007669"/>
    <property type="project" value="UniProtKB-UniRule"/>
</dbReference>
<dbReference type="GO" id="GO:0010795">
    <property type="term" value="P:regulation of ubiquinone biosynthetic process"/>
    <property type="evidence" value="ECO:0007669"/>
    <property type="project" value="UniProtKB-UniRule"/>
</dbReference>
<dbReference type="GO" id="GO:0006744">
    <property type="term" value="P:ubiquinone biosynthetic process"/>
    <property type="evidence" value="ECO:0007669"/>
    <property type="project" value="UniProtKB-UniPathway"/>
</dbReference>
<dbReference type="CDD" id="cd13972">
    <property type="entry name" value="UbiB"/>
    <property type="match status" value="1"/>
</dbReference>
<dbReference type="HAMAP" id="MF_00414">
    <property type="entry name" value="UbiB"/>
    <property type="match status" value="1"/>
</dbReference>
<dbReference type="InterPro" id="IPR004147">
    <property type="entry name" value="ABC1_dom"/>
</dbReference>
<dbReference type="InterPro" id="IPR011009">
    <property type="entry name" value="Kinase-like_dom_sf"/>
</dbReference>
<dbReference type="InterPro" id="IPR010232">
    <property type="entry name" value="UbiB"/>
</dbReference>
<dbReference type="InterPro" id="IPR045308">
    <property type="entry name" value="UbiB_bact"/>
</dbReference>
<dbReference type="InterPro" id="IPR050154">
    <property type="entry name" value="UbiB_kinase"/>
</dbReference>
<dbReference type="NCBIfam" id="NF003404">
    <property type="entry name" value="PRK04750.1"/>
    <property type="match status" value="1"/>
</dbReference>
<dbReference type="NCBIfam" id="TIGR01982">
    <property type="entry name" value="UbiB"/>
    <property type="match status" value="1"/>
</dbReference>
<dbReference type="PANTHER" id="PTHR10566">
    <property type="entry name" value="CHAPERONE-ACTIVITY OF BC1 COMPLEX CABC1 -RELATED"/>
    <property type="match status" value="1"/>
</dbReference>
<dbReference type="PANTHER" id="PTHR10566:SF113">
    <property type="entry name" value="PROTEIN ACTIVITY OF BC1 COMPLEX KINASE 7, CHLOROPLASTIC"/>
    <property type="match status" value="1"/>
</dbReference>
<dbReference type="Pfam" id="PF03109">
    <property type="entry name" value="ABC1"/>
    <property type="match status" value="1"/>
</dbReference>
<dbReference type="SUPFAM" id="SSF56112">
    <property type="entry name" value="Protein kinase-like (PK-like)"/>
    <property type="match status" value="1"/>
</dbReference>
<evidence type="ECO:0000255" key="1">
    <source>
        <dbReference type="HAMAP-Rule" id="MF_00414"/>
    </source>
</evidence>
<organism>
    <name type="scientific">Escherichia coli (strain K12 / DH10B)</name>
    <dbReference type="NCBI Taxonomy" id="316385"/>
    <lineage>
        <taxon>Bacteria</taxon>
        <taxon>Pseudomonadati</taxon>
        <taxon>Pseudomonadota</taxon>
        <taxon>Gammaproteobacteria</taxon>
        <taxon>Enterobacterales</taxon>
        <taxon>Enterobacteriaceae</taxon>
        <taxon>Escherichia</taxon>
    </lineage>
</organism>
<accession>B1XAJ9</accession>
<comment type="function">
    <text evidence="1">Is probably a protein kinase regulator of UbiI activity which is involved in aerobic coenzyme Q (ubiquinone) biosynthesis.</text>
</comment>
<comment type="pathway">
    <text>Cofactor biosynthesis; ubiquinone biosynthesis [regulation].</text>
</comment>
<comment type="subcellular location">
    <subcellularLocation>
        <location evidence="1">Cell inner membrane</location>
        <topology evidence="1">Multi-pass membrane protein</topology>
    </subcellularLocation>
</comment>
<comment type="similarity">
    <text evidence="1">Belongs to the ABC1 family. UbiB subfamily.</text>
</comment>
<reference key="1">
    <citation type="journal article" date="2008" name="J. Bacteriol.">
        <title>The complete genome sequence of Escherichia coli DH10B: insights into the biology of a laboratory workhorse.</title>
        <authorList>
            <person name="Durfee T."/>
            <person name="Nelson R."/>
            <person name="Baldwin S."/>
            <person name="Plunkett G. III"/>
            <person name="Burland V."/>
            <person name="Mau B."/>
            <person name="Petrosino J.F."/>
            <person name="Qin X."/>
            <person name="Muzny D.M."/>
            <person name="Ayele M."/>
            <person name="Gibbs R.A."/>
            <person name="Csorgo B."/>
            <person name="Posfai G."/>
            <person name="Weinstock G.M."/>
            <person name="Blattner F.R."/>
        </authorList>
    </citation>
    <scope>NUCLEOTIDE SEQUENCE [LARGE SCALE GENOMIC DNA]</scope>
    <source>
        <strain>K12 / DH10B</strain>
    </source>
</reference>
<name>UBIB_ECODH</name>
<feature type="chain" id="PRO_1000123906" description="Probable protein kinase UbiB">
    <location>
        <begin position="1"/>
        <end position="546"/>
    </location>
</feature>
<feature type="transmembrane region" description="Helical" evidence="1">
    <location>
        <begin position="501"/>
        <end position="521"/>
    </location>
</feature>
<feature type="transmembrane region" description="Helical" evidence="1">
    <location>
        <begin position="522"/>
        <end position="542"/>
    </location>
</feature>
<feature type="domain" description="Protein kinase" evidence="1">
    <location>
        <begin position="124"/>
        <end position="502"/>
    </location>
</feature>
<feature type="active site" description="Proton acceptor" evidence="1">
    <location>
        <position position="288"/>
    </location>
</feature>
<feature type="binding site" evidence="1">
    <location>
        <begin position="130"/>
        <end position="138"/>
    </location>
    <ligand>
        <name>ATP</name>
        <dbReference type="ChEBI" id="CHEBI:30616"/>
    </ligand>
</feature>
<feature type="binding site" evidence="1">
    <location>
        <position position="153"/>
    </location>
    <ligand>
        <name>ATP</name>
        <dbReference type="ChEBI" id="CHEBI:30616"/>
    </ligand>
</feature>
<keyword id="KW-0067">ATP-binding</keyword>
<keyword id="KW-0997">Cell inner membrane</keyword>
<keyword id="KW-1003">Cell membrane</keyword>
<keyword id="KW-0418">Kinase</keyword>
<keyword id="KW-0472">Membrane</keyword>
<keyword id="KW-0547">Nucleotide-binding</keyword>
<keyword id="KW-0808">Transferase</keyword>
<keyword id="KW-0812">Transmembrane</keyword>
<keyword id="KW-1133">Transmembrane helix</keyword>
<keyword id="KW-0831">Ubiquinone biosynthesis</keyword>
<protein>
    <recommendedName>
        <fullName evidence="1">Probable protein kinase UbiB</fullName>
        <ecNumber evidence="1">2.7.-.-</ecNumber>
    </recommendedName>
    <alternativeName>
        <fullName evidence="1">Ubiquinone biosynthesis protein UbiB</fullName>
    </alternativeName>
</protein>
<proteinExistence type="inferred from homology"/>
<sequence>MTPGEVRRLYFIIRTFLSYGLDELIPKMRITLPLRLWRYSLFWMPNRHKDKLLGERLRLALQELGPVWIKFGQMLSTRRDLFPPHIADQLALLQDKVAPFDGKLAKQQIEAAMGGLPVEAWFDDFEIKPLASASIAQVHTARLKSNGKEVVIKVIRPDILPVIKADLKLIYRLARWVPRLLPDGRRLRPTEVVREYEKTLIDELNLLRESANAIQLRRNFEDSPMLYIPEVYPDYCSEGMMVMERIYGIPVSDVAALEKNGTNMKLLAERGVQVFFTQVFRDSFFHADMHPGNIFVSYEHPENPKYIGIDCGIVGSLNKEDKRYLAENFIAFFNRDYRKVAELHVDSGWVPPDTNVEEFEFAIRTVCEPIFEKPLAEISFGHVLLNLFNTARRFNMEVQPQLVLLQKTLLYVEGVGRQLYPQLDLWKTAKPFLESWIKDQVGIPALVRAFKEKAPFWVEKMPELPELVYDSLRQGKYLQHSVDKIARELQSNHVRQGQSRYFLGIGATLVLSGTFLLVSRPEWGLMPGWLMAGGLIAWFVGWRKTR</sequence>
<gene>
    <name evidence="1" type="primary">ubiB</name>
    <name type="ordered locus">ECDH10B_4026</name>
</gene>